<keyword id="KW-0186">Copper</keyword>
<keyword id="KW-0249">Electron transport</keyword>
<keyword id="KW-0460">Magnesium</keyword>
<keyword id="KW-0472">Membrane</keyword>
<keyword id="KW-0479">Metal-binding</keyword>
<keyword id="KW-0496">Mitochondrion</keyword>
<keyword id="KW-0999">Mitochondrion inner membrane</keyword>
<keyword id="KW-0597">Phosphoprotein</keyword>
<keyword id="KW-0679">Respiratory chain</keyword>
<keyword id="KW-1278">Translocase</keyword>
<keyword id="KW-0812">Transmembrane</keyword>
<keyword id="KW-1133">Transmembrane helix</keyword>
<keyword id="KW-0813">Transport</keyword>
<organism>
    <name type="scientific">Vulpes zerda</name>
    <name type="common">Fennec fox</name>
    <name type="synonym">Fennecus zerda</name>
    <dbReference type="NCBI Taxonomy" id="68732"/>
    <lineage>
        <taxon>Eukaryota</taxon>
        <taxon>Metazoa</taxon>
        <taxon>Chordata</taxon>
        <taxon>Craniata</taxon>
        <taxon>Vertebrata</taxon>
        <taxon>Euteleostomi</taxon>
        <taxon>Mammalia</taxon>
        <taxon>Eutheria</taxon>
        <taxon>Laurasiatheria</taxon>
        <taxon>Carnivora</taxon>
        <taxon>Caniformia</taxon>
        <taxon>Canidae</taxon>
        <taxon>Vulpes</taxon>
    </lineage>
</organism>
<protein>
    <recommendedName>
        <fullName>Cytochrome c oxidase subunit 2</fullName>
        <ecNumber>7.1.1.9</ecNumber>
    </recommendedName>
    <alternativeName>
        <fullName>Cytochrome c oxidase polypeptide II</fullName>
    </alternativeName>
</protein>
<comment type="function">
    <text evidence="3">Component of the cytochrome c oxidase, the last enzyme in the mitochondrial electron transport chain which drives oxidative phosphorylation. The respiratory chain contains 3 multisubunit complexes succinate dehydrogenase (complex II, CII), ubiquinol-cytochrome c oxidoreductase (cytochrome b-c1 complex, complex III, CIII) and cytochrome c oxidase (complex IV, CIV), that cooperate to transfer electrons derived from NADH and succinate to molecular oxygen, creating an electrochemical gradient over the inner membrane that drives transmembrane transport and the ATP synthase. Cytochrome c oxidase is the component of the respiratory chain that catalyzes the reduction of oxygen to water. Electrons originating from reduced cytochrome c in the intermembrane space (IMS) are transferred via the dinuclear copper A center (CU(A)) of subunit 2 and heme A of subunit 1 to the active site in subunit 1, a binuclear center (BNC) formed by heme A3 and copper B (CU(B)). The BNC reduces molecular oxygen to 2 water molecules using 4 electrons from cytochrome c in the IMS and 4 protons from the mitochondrial matrix.</text>
</comment>
<comment type="catalytic activity">
    <reaction evidence="3">
        <text>4 Fe(II)-[cytochrome c] + O2 + 8 H(+)(in) = 4 Fe(III)-[cytochrome c] + 2 H2O + 4 H(+)(out)</text>
        <dbReference type="Rhea" id="RHEA:11436"/>
        <dbReference type="Rhea" id="RHEA-COMP:10350"/>
        <dbReference type="Rhea" id="RHEA-COMP:14399"/>
        <dbReference type="ChEBI" id="CHEBI:15377"/>
        <dbReference type="ChEBI" id="CHEBI:15378"/>
        <dbReference type="ChEBI" id="CHEBI:15379"/>
        <dbReference type="ChEBI" id="CHEBI:29033"/>
        <dbReference type="ChEBI" id="CHEBI:29034"/>
        <dbReference type="EC" id="7.1.1.9"/>
    </reaction>
    <physiologicalReaction direction="left-to-right" evidence="3">
        <dbReference type="Rhea" id="RHEA:11437"/>
    </physiologicalReaction>
</comment>
<comment type="cofactor">
    <cofactor evidence="4">
        <name>Cu cation</name>
        <dbReference type="ChEBI" id="CHEBI:23378"/>
    </cofactor>
    <text evidence="4">Binds a dinuclear copper A center per subunit.</text>
</comment>
<comment type="subunit">
    <text evidence="1 4">Component of the cytochrome c oxidase (complex IV, CIV), a multisubunit enzyme composed of 14 subunits. The complex is composed of a catalytic core of 3 subunits MT-CO1, MT-CO2 and MT-CO3, encoded in the mitochondrial DNA, and 11 supernumerary subunits COX4I, COX5A, COX5B, COX6A, COX6B, COX6C, COX7A, COX7B, COX7C, COX8 and NDUFA4, which are encoded in the nuclear genome. The complex exists as a monomer or a dimer and forms supercomplexes (SCs) in the inner mitochondrial membrane with NADH-ubiquinone oxidoreductase (complex I, CI) and ubiquinol-cytochrome c oxidoreductase (cytochrome b-c1 complex, complex III, CIII), resulting in different assemblies (supercomplex SCI(1)III(2)IV(1) and megacomplex MCI(2)III(2)IV(2)) (By similarity). Found in a complex with TMEM177, COA6, COX18, COX20, SCO1 and SCO2. Interacts with TMEM177 in a COX20-dependent manner. Interacts with COX20. Interacts with COX16 (By similarity).</text>
</comment>
<comment type="subcellular location">
    <subcellularLocation>
        <location evidence="4">Mitochondrion inner membrane</location>
        <topology evidence="4">Multi-pass membrane protein</topology>
    </subcellularLocation>
</comment>
<comment type="similarity">
    <text evidence="5">Belongs to the cytochrome c oxidase subunit 2 family.</text>
</comment>
<proteinExistence type="inferred from homology"/>
<feature type="chain" id="PRO_0000183713" description="Cytochrome c oxidase subunit 2">
    <location>
        <begin position="1"/>
        <end position="227"/>
    </location>
</feature>
<feature type="topological domain" description="Mitochondrial intermembrane" evidence="4">
    <location>
        <begin position="1"/>
        <end position="14"/>
    </location>
</feature>
<feature type="transmembrane region" description="Helical; Name=I" evidence="4">
    <location>
        <begin position="15"/>
        <end position="45"/>
    </location>
</feature>
<feature type="topological domain" description="Mitochondrial matrix" evidence="4">
    <location>
        <begin position="46"/>
        <end position="59"/>
    </location>
</feature>
<feature type="transmembrane region" description="Helical; Name=II" evidence="4">
    <location>
        <begin position="60"/>
        <end position="87"/>
    </location>
</feature>
<feature type="topological domain" description="Mitochondrial intermembrane" evidence="4">
    <location>
        <begin position="88"/>
        <end position="227"/>
    </location>
</feature>
<feature type="binding site" evidence="4">
    <location>
        <position position="161"/>
    </location>
    <ligand>
        <name>Cu cation</name>
        <dbReference type="ChEBI" id="CHEBI:23378"/>
        <label>A1</label>
    </ligand>
</feature>
<feature type="binding site" evidence="4">
    <location>
        <position position="196"/>
    </location>
    <ligand>
        <name>Cu cation</name>
        <dbReference type="ChEBI" id="CHEBI:23378"/>
        <label>A1</label>
    </ligand>
</feature>
<feature type="binding site" evidence="4">
    <location>
        <position position="196"/>
    </location>
    <ligand>
        <name>Cu cation</name>
        <dbReference type="ChEBI" id="CHEBI:23378"/>
        <label>A2</label>
    </ligand>
</feature>
<feature type="binding site" evidence="4">
    <location>
        <position position="198"/>
    </location>
    <ligand>
        <name>Cu cation</name>
        <dbReference type="ChEBI" id="CHEBI:23378"/>
        <label>A2</label>
    </ligand>
</feature>
<feature type="binding site" evidence="4">
    <location>
        <position position="198"/>
    </location>
    <ligand>
        <name>Mg(2+)</name>
        <dbReference type="ChEBI" id="CHEBI:18420"/>
        <note>ligand shared with MT-CO1</note>
    </ligand>
</feature>
<feature type="binding site" evidence="4">
    <location>
        <position position="200"/>
    </location>
    <ligand>
        <name>Cu cation</name>
        <dbReference type="ChEBI" id="CHEBI:23378"/>
        <label>A1</label>
    </ligand>
</feature>
<feature type="binding site" evidence="4">
    <location>
        <position position="200"/>
    </location>
    <ligand>
        <name>Cu cation</name>
        <dbReference type="ChEBI" id="CHEBI:23378"/>
        <label>A2</label>
    </ligand>
</feature>
<feature type="binding site" evidence="4">
    <location>
        <position position="204"/>
    </location>
    <ligand>
        <name>Cu cation</name>
        <dbReference type="ChEBI" id="CHEBI:23378"/>
        <label>A2</label>
    </ligand>
</feature>
<feature type="binding site" evidence="4">
    <location>
        <position position="207"/>
    </location>
    <ligand>
        <name>Cu cation</name>
        <dbReference type="ChEBI" id="CHEBI:23378"/>
        <label>A1</label>
    </ligand>
</feature>
<feature type="modified residue" description="Phosphotyrosine" evidence="2">
    <location>
        <position position="218"/>
    </location>
</feature>
<accession>O47673</accession>
<geneLocation type="mitochondrion"/>
<name>COX2_VULZE</name>
<gene>
    <name type="primary">MT-CO2</name>
    <name type="synonym">COII</name>
    <name type="synonym">COX2</name>
    <name type="synonym">COXII</name>
    <name type="synonym">MTCO2</name>
</gene>
<reference key="1">
    <citation type="journal article" date="1997" name="Syst. Biol.">
        <title>Molecular systematics of the Canidae.</title>
        <authorList>
            <person name="Wayne R.K."/>
            <person name="Geffen E."/>
            <person name="Girman D.J."/>
            <person name="Koepfli K.-P."/>
            <person name="Lau L.M."/>
            <person name="Marshall C.R."/>
        </authorList>
    </citation>
    <scope>NUCLEOTIDE SEQUENCE [GENOMIC DNA]</scope>
</reference>
<evidence type="ECO:0000250" key="1">
    <source>
        <dbReference type="UniProtKB" id="P00403"/>
    </source>
</evidence>
<evidence type="ECO:0000250" key="2">
    <source>
        <dbReference type="UniProtKB" id="P00406"/>
    </source>
</evidence>
<evidence type="ECO:0000250" key="3">
    <source>
        <dbReference type="UniProtKB" id="P00410"/>
    </source>
</evidence>
<evidence type="ECO:0000250" key="4">
    <source>
        <dbReference type="UniProtKB" id="P68530"/>
    </source>
</evidence>
<evidence type="ECO:0000305" key="5"/>
<dbReference type="EC" id="7.1.1.9"/>
<dbReference type="EMBL" id="AF028218">
    <property type="protein sequence ID" value="AAC00111.1"/>
    <property type="molecule type" value="Genomic_DNA"/>
</dbReference>
<dbReference type="SMR" id="O47673"/>
<dbReference type="GO" id="GO:0005743">
    <property type="term" value="C:mitochondrial inner membrane"/>
    <property type="evidence" value="ECO:0007669"/>
    <property type="project" value="UniProtKB-SubCell"/>
</dbReference>
<dbReference type="GO" id="GO:0045277">
    <property type="term" value="C:respiratory chain complex IV"/>
    <property type="evidence" value="ECO:0000250"/>
    <property type="project" value="UniProtKB"/>
</dbReference>
<dbReference type="GO" id="GO:0005507">
    <property type="term" value="F:copper ion binding"/>
    <property type="evidence" value="ECO:0007669"/>
    <property type="project" value="InterPro"/>
</dbReference>
<dbReference type="GO" id="GO:0004129">
    <property type="term" value="F:cytochrome-c oxidase activity"/>
    <property type="evidence" value="ECO:0007669"/>
    <property type="project" value="UniProtKB-EC"/>
</dbReference>
<dbReference type="GO" id="GO:0042773">
    <property type="term" value="P:ATP synthesis coupled electron transport"/>
    <property type="evidence" value="ECO:0007669"/>
    <property type="project" value="TreeGrafter"/>
</dbReference>
<dbReference type="CDD" id="cd13912">
    <property type="entry name" value="CcO_II_C"/>
    <property type="match status" value="1"/>
</dbReference>
<dbReference type="FunFam" id="1.10.287.90:FF:000001">
    <property type="entry name" value="Cytochrome c oxidase subunit 2"/>
    <property type="match status" value="1"/>
</dbReference>
<dbReference type="FunFam" id="2.60.40.420:FF:000001">
    <property type="entry name" value="Cytochrome c oxidase subunit 2"/>
    <property type="match status" value="1"/>
</dbReference>
<dbReference type="Gene3D" id="1.10.287.90">
    <property type="match status" value="1"/>
</dbReference>
<dbReference type="Gene3D" id="2.60.40.420">
    <property type="entry name" value="Cupredoxins - blue copper proteins"/>
    <property type="match status" value="1"/>
</dbReference>
<dbReference type="InterPro" id="IPR045187">
    <property type="entry name" value="CcO_II"/>
</dbReference>
<dbReference type="InterPro" id="IPR002429">
    <property type="entry name" value="CcO_II-like_C"/>
</dbReference>
<dbReference type="InterPro" id="IPR034210">
    <property type="entry name" value="CcO_II_C"/>
</dbReference>
<dbReference type="InterPro" id="IPR001505">
    <property type="entry name" value="Copper_CuA"/>
</dbReference>
<dbReference type="InterPro" id="IPR008972">
    <property type="entry name" value="Cupredoxin"/>
</dbReference>
<dbReference type="InterPro" id="IPR014222">
    <property type="entry name" value="Cyt_c_oxidase_su2"/>
</dbReference>
<dbReference type="InterPro" id="IPR011759">
    <property type="entry name" value="Cyt_c_oxidase_su2_TM_dom"/>
</dbReference>
<dbReference type="InterPro" id="IPR036257">
    <property type="entry name" value="Cyt_c_oxidase_su2_TM_sf"/>
</dbReference>
<dbReference type="NCBIfam" id="TIGR02866">
    <property type="entry name" value="CoxB"/>
    <property type="match status" value="1"/>
</dbReference>
<dbReference type="PANTHER" id="PTHR22888:SF9">
    <property type="entry name" value="CYTOCHROME C OXIDASE SUBUNIT 2"/>
    <property type="match status" value="1"/>
</dbReference>
<dbReference type="PANTHER" id="PTHR22888">
    <property type="entry name" value="CYTOCHROME C OXIDASE, SUBUNIT II"/>
    <property type="match status" value="1"/>
</dbReference>
<dbReference type="Pfam" id="PF00116">
    <property type="entry name" value="COX2"/>
    <property type="match status" value="1"/>
</dbReference>
<dbReference type="Pfam" id="PF02790">
    <property type="entry name" value="COX2_TM"/>
    <property type="match status" value="1"/>
</dbReference>
<dbReference type="PRINTS" id="PR01166">
    <property type="entry name" value="CYCOXIDASEII"/>
</dbReference>
<dbReference type="SUPFAM" id="SSF49503">
    <property type="entry name" value="Cupredoxins"/>
    <property type="match status" value="1"/>
</dbReference>
<dbReference type="SUPFAM" id="SSF81464">
    <property type="entry name" value="Cytochrome c oxidase subunit II-like, transmembrane region"/>
    <property type="match status" value="1"/>
</dbReference>
<dbReference type="PROSITE" id="PS00078">
    <property type="entry name" value="COX2"/>
    <property type="match status" value="1"/>
</dbReference>
<dbReference type="PROSITE" id="PS50857">
    <property type="entry name" value="COX2_CUA"/>
    <property type="match status" value="1"/>
</dbReference>
<dbReference type="PROSITE" id="PS50999">
    <property type="entry name" value="COX2_TM"/>
    <property type="match status" value="1"/>
</dbReference>
<sequence>MAYPFQLGLQDATSPIMEELLHFHDHTLMIVFLISSLVLYIITLMLTTKLTHTSTMDAQEVETVWTILPAIILVLIALPSLRILYMMDEINNPSLTVKTMGHQWYWSYEYTDYEDLNFDSYMIPTQELKPGELRLLEVDNRVVLPMEMTIRMLISSEDVLHSWAVPSLGLKTDAIPGRLNQTTLMAMRPGLYYGQCSEICGSNHSFMPIVLEMVPLSYFETWSALMV</sequence>